<gene>
    <name type="primary">splA</name>
</gene>
<evidence type="ECO:0000250" key="1"/>
<evidence type="ECO:0000305" key="2"/>
<dbReference type="EC" id="3.4.21.-"/>
<dbReference type="EMBL" id="EF531611">
    <property type="protein sequence ID" value="ABQ44276.1"/>
    <property type="molecule type" value="Genomic_DNA"/>
</dbReference>
<dbReference type="EMBL" id="EF531612">
    <property type="protein sequence ID" value="ABQ44277.1"/>
    <property type="molecule type" value="Genomic_DNA"/>
</dbReference>
<dbReference type="EMBL" id="EF531613">
    <property type="protein sequence ID" value="ABQ44278.1"/>
    <property type="molecule type" value="Genomic_DNA"/>
</dbReference>
<dbReference type="SMR" id="A5JJ15"/>
<dbReference type="MEROPS" id="S01.503"/>
<dbReference type="GO" id="GO:0005576">
    <property type="term" value="C:extracellular region"/>
    <property type="evidence" value="ECO:0007669"/>
    <property type="project" value="UniProtKB-SubCell"/>
</dbReference>
<dbReference type="GO" id="GO:0004252">
    <property type="term" value="F:serine-type endopeptidase activity"/>
    <property type="evidence" value="ECO:0007669"/>
    <property type="project" value="InterPro"/>
</dbReference>
<dbReference type="GO" id="GO:0006508">
    <property type="term" value="P:proteolysis"/>
    <property type="evidence" value="ECO:0007669"/>
    <property type="project" value="UniProtKB-KW"/>
</dbReference>
<dbReference type="Gene3D" id="2.40.10.10">
    <property type="entry name" value="Trypsin-like serine proteases"/>
    <property type="match status" value="2"/>
</dbReference>
<dbReference type="InterPro" id="IPR009003">
    <property type="entry name" value="Peptidase_S1_PA"/>
</dbReference>
<dbReference type="InterPro" id="IPR043504">
    <property type="entry name" value="Peptidase_S1_PA_chymotrypsin"/>
</dbReference>
<dbReference type="InterPro" id="IPR008256">
    <property type="entry name" value="Peptidase_S1B"/>
</dbReference>
<dbReference type="InterPro" id="IPR008353">
    <property type="entry name" value="Peptidase_S1B_tx"/>
</dbReference>
<dbReference type="InterPro" id="IPR001254">
    <property type="entry name" value="Trypsin_dom"/>
</dbReference>
<dbReference type="InterPro" id="IPR028301">
    <property type="entry name" value="V8_his_AS"/>
</dbReference>
<dbReference type="PANTHER" id="PTHR43019:SF23">
    <property type="entry name" value="PROTEASE DO-LIKE 5, CHLOROPLASTIC"/>
    <property type="match status" value="1"/>
</dbReference>
<dbReference type="PANTHER" id="PTHR43019">
    <property type="entry name" value="SERINE ENDOPROTEASE DEGS"/>
    <property type="match status" value="1"/>
</dbReference>
<dbReference type="Pfam" id="PF00089">
    <property type="entry name" value="Trypsin"/>
    <property type="match status" value="1"/>
</dbReference>
<dbReference type="PRINTS" id="PR01774">
    <property type="entry name" value="EXFOLTOXIN"/>
</dbReference>
<dbReference type="PRINTS" id="PR00839">
    <property type="entry name" value="V8PROTEASE"/>
</dbReference>
<dbReference type="SUPFAM" id="SSF50494">
    <property type="entry name" value="Trypsin-like serine proteases"/>
    <property type="match status" value="1"/>
</dbReference>
<dbReference type="PROSITE" id="PS00672">
    <property type="entry name" value="V8_HIS"/>
    <property type="match status" value="1"/>
</dbReference>
<reference key="1">
    <citation type="journal article" date="2007" name="Vet. Microbiol.">
        <title>Microarray based study on virulence-associated genes and resistance determinants of Staphylococcus aureus isolates from cattle.</title>
        <authorList>
            <person name="Monecke S."/>
            <person name="Kuhnert P."/>
            <person name="Hotzel H."/>
            <person name="Slickers P."/>
            <person name="Ehricht R."/>
        </authorList>
    </citation>
    <scope>NUCLEOTIDE SEQUENCE [GENOMIC DNA]</scope>
    <source>
        <strain>VBI-159227</strain>
        <strain>VBI-160099</strain>
        <strain>VBI-M0894</strain>
    </source>
</reference>
<name>SPLA2_STAAU</name>
<sequence>MNKNVMVKGLTALDILTSLGCAENISDQPHSIAKAEKNVKEITDATKAPYNSVVAFAGGTGVVVGKNTIVTNKHIAKSNNIFKNRVSAHHSSKGKGGGNYDVKDIVEYPGKEDLAIVHVHETSTEGLNFNKNVSYTKFADGAKAKDRISIIGYPKGAQTKYKMFESTGTINHINGTIMEFDAYAQPGNSGSPVLNSKNELIGILYAGSGKDESEKNFGVYFTPQLKEFIQNNIEK</sequence>
<feature type="signal peptide" evidence="1">
    <location>
        <begin position="1"/>
        <end position="35"/>
    </location>
</feature>
<feature type="chain" id="PRO_0000359526" description="Serine protease SplA">
    <location>
        <begin position="36"/>
        <end position="235"/>
    </location>
</feature>
<feature type="active site" description="Charge relay system" evidence="1">
    <location>
        <position position="74"/>
    </location>
</feature>
<feature type="active site" description="Charge relay system" evidence="1">
    <location>
        <position position="113"/>
    </location>
</feature>
<feature type="active site" description="Charge relay system" evidence="1">
    <location>
        <position position="189"/>
    </location>
</feature>
<feature type="sequence variant" description="In strain: VBI-M0894.">
    <original>D</original>
    <variation>T</variation>
    <location>
        <position position="14"/>
    </location>
</feature>
<feature type="sequence variant" description="In strain: VBI-M0894.">
    <original>C</original>
    <variation>F</variation>
    <location>
        <position position="21"/>
    </location>
</feature>
<feature type="sequence variant" description="In strain: VBI-M0894.">
    <original>S</original>
    <variation>G</variation>
    <location>
        <position position="92"/>
    </location>
</feature>
<feature type="sequence variant" description="In strain: VBI-M0894.">
    <original>T</original>
    <variation>I</variation>
    <location>
        <position position="124"/>
    </location>
</feature>
<feature type="sequence variant" description="In strain: VBI-M0894.">
    <original>I</original>
    <variation>V</variation>
    <location>
        <position position="150"/>
    </location>
</feature>
<feature type="sequence variant" description="In strain: VBI-M0894.">
    <original>A</original>
    <variation>S</variation>
    <location>
        <position position="157"/>
    </location>
</feature>
<feature type="sequence variant" description="In strain: VBI-M0894.">
    <original>I</original>
    <variation>F</variation>
    <location>
        <position position="177"/>
    </location>
</feature>
<feature type="sequence variant" description="In strain: VBI-M0894.">
    <original>F</original>
    <variation>Y</variation>
    <location>
        <position position="217"/>
    </location>
</feature>
<proteinExistence type="inferred from homology"/>
<protein>
    <recommendedName>
        <fullName>Serine protease SplA</fullName>
        <ecNumber>3.4.21.-</ecNumber>
    </recommendedName>
</protein>
<organism>
    <name type="scientific">Staphylococcus aureus</name>
    <dbReference type="NCBI Taxonomy" id="1280"/>
    <lineage>
        <taxon>Bacteria</taxon>
        <taxon>Bacillati</taxon>
        <taxon>Bacillota</taxon>
        <taxon>Bacilli</taxon>
        <taxon>Bacillales</taxon>
        <taxon>Staphylococcaceae</taxon>
        <taxon>Staphylococcus</taxon>
    </lineage>
</organism>
<accession>A5JJ15</accession>
<accession>A5JJ16</accession>
<accession>A5JJ17</accession>
<keyword id="KW-0378">Hydrolase</keyword>
<keyword id="KW-0645">Protease</keyword>
<keyword id="KW-0964">Secreted</keyword>
<keyword id="KW-0720">Serine protease</keyword>
<keyword id="KW-0732">Signal</keyword>
<comment type="subcellular location">
    <subcellularLocation>
        <location evidence="1">Secreted</location>
    </subcellularLocation>
</comment>
<comment type="similarity">
    <text evidence="2">Belongs to the peptidase S1B family.</text>
</comment>